<dbReference type="EC" id="6.3.5.-" evidence="1"/>
<dbReference type="EMBL" id="CP001213">
    <property type="protein sequence ID" value="ACL28961.1"/>
    <property type="molecule type" value="Genomic_DNA"/>
</dbReference>
<dbReference type="RefSeq" id="WP_004219120.1">
    <property type="nucleotide sequence ID" value="NC_011835.1"/>
</dbReference>
<dbReference type="SMR" id="B8DSI2"/>
<dbReference type="STRING" id="442563.BLA_0668"/>
<dbReference type="GeneID" id="29696502"/>
<dbReference type="KEGG" id="bla:BLA_0668"/>
<dbReference type="HOGENOM" id="CLU_019240_0_0_11"/>
<dbReference type="Proteomes" id="UP000002456">
    <property type="component" value="Chromosome"/>
</dbReference>
<dbReference type="GO" id="GO:0050566">
    <property type="term" value="F:asparaginyl-tRNA synthase (glutamine-hydrolyzing) activity"/>
    <property type="evidence" value="ECO:0007669"/>
    <property type="project" value="RHEA"/>
</dbReference>
<dbReference type="GO" id="GO:0005524">
    <property type="term" value="F:ATP binding"/>
    <property type="evidence" value="ECO:0007669"/>
    <property type="project" value="UniProtKB-KW"/>
</dbReference>
<dbReference type="GO" id="GO:0050567">
    <property type="term" value="F:glutaminyl-tRNA synthase (glutamine-hydrolyzing) activity"/>
    <property type="evidence" value="ECO:0007669"/>
    <property type="project" value="UniProtKB-UniRule"/>
</dbReference>
<dbReference type="GO" id="GO:0070681">
    <property type="term" value="P:glutaminyl-tRNAGln biosynthesis via transamidation"/>
    <property type="evidence" value="ECO:0007669"/>
    <property type="project" value="TreeGrafter"/>
</dbReference>
<dbReference type="GO" id="GO:0006412">
    <property type="term" value="P:translation"/>
    <property type="evidence" value="ECO:0007669"/>
    <property type="project" value="UniProtKB-UniRule"/>
</dbReference>
<dbReference type="FunFam" id="1.10.10.410:FF:000001">
    <property type="entry name" value="Aspartyl/glutamyl-tRNA(Asn/Gln) amidotransferase subunit B"/>
    <property type="match status" value="1"/>
</dbReference>
<dbReference type="Gene3D" id="1.10.10.410">
    <property type="match status" value="1"/>
</dbReference>
<dbReference type="HAMAP" id="MF_00121">
    <property type="entry name" value="GatB"/>
    <property type="match status" value="1"/>
</dbReference>
<dbReference type="InterPro" id="IPR017959">
    <property type="entry name" value="Asn/Gln-tRNA_amidoTrfase_suB/E"/>
</dbReference>
<dbReference type="InterPro" id="IPR006075">
    <property type="entry name" value="Asn/Gln-tRNA_Trfase_suB/E_cat"/>
</dbReference>
<dbReference type="InterPro" id="IPR018027">
    <property type="entry name" value="Asn/Gln_amidotransferase"/>
</dbReference>
<dbReference type="InterPro" id="IPR003789">
    <property type="entry name" value="Asn/Gln_tRNA_amidoTrase-B-like"/>
</dbReference>
<dbReference type="InterPro" id="IPR004413">
    <property type="entry name" value="GatB"/>
</dbReference>
<dbReference type="InterPro" id="IPR023168">
    <property type="entry name" value="GatB_Yqey_C_2"/>
</dbReference>
<dbReference type="InterPro" id="IPR017958">
    <property type="entry name" value="Gln-tRNA_amidoTrfase_suB_CS"/>
</dbReference>
<dbReference type="InterPro" id="IPR014746">
    <property type="entry name" value="Gln_synth/guanido_kin_cat_dom"/>
</dbReference>
<dbReference type="NCBIfam" id="TIGR00133">
    <property type="entry name" value="gatB"/>
    <property type="match status" value="1"/>
</dbReference>
<dbReference type="NCBIfam" id="NF004012">
    <property type="entry name" value="PRK05477.1-2"/>
    <property type="match status" value="1"/>
</dbReference>
<dbReference type="NCBIfam" id="NF004013">
    <property type="entry name" value="PRK05477.1-3"/>
    <property type="match status" value="1"/>
</dbReference>
<dbReference type="NCBIfam" id="NF004014">
    <property type="entry name" value="PRK05477.1-4"/>
    <property type="match status" value="1"/>
</dbReference>
<dbReference type="PANTHER" id="PTHR11659">
    <property type="entry name" value="GLUTAMYL-TRNA GLN AMIDOTRANSFERASE SUBUNIT B MITOCHONDRIAL AND PROKARYOTIC PET112-RELATED"/>
    <property type="match status" value="1"/>
</dbReference>
<dbReference type="PANTHER" id="PTHR11659:SF0">
    <property type="entry name" value="GLUTAMYL-TRNA(GLN) AMIDOTRANSFERASE SUBUNIT B, MITOCHONDRIAL"/>
    <property type="match status" value="1"/>
</dbReference>
<dbReference type="Pfam" id="PF02934">
    <property type="entry name" value="GatB_N"/>
    <property type="match status" value="1"/>
</dbReference>
<dbReference type="Pfam" id="PF02637">
    <property type="entry name" value="GatB_Yqey"/>
    <property type="match status" value="1"/>
</dbReference>
<dbReference type="SMART" id="SM00845">
    <property type="entry name" value="GatB_Yqey"/>
    <property type="match status" value="1"/>
</dbReference>
<dbReference type="SUPFAM" id="SSF89095">
    <property type="entry name" value="GatB/YqeY motif"/>
    <property type="match status" value="1"/>
</dbReference>
<dbReference type="SUPFAM" id="SSF55931">
    <property type="entry name" value="Glutamine synthetase/guanido kinase"/>
    <property type="match status" value="1"/>
</dbReference>
<dbReference type="PROSITE" id="PS01234">
    <property type="entry name" value="GATB"/>
    <property type="match status" value="1"/>
</dbReference>
<accession>B8DSI2</accession>
<sequence length="499" mass="55096">MAEKLMKYSEAVKEFDPVIGLETHVELSTRTKLFCPAPISFGAEPNTELTPVSLGLPGSLPVLNATAVDYAIKLGLALHCQINEWSQFSRKNYFYPDMPRDYQISQYDKPTNGEGYLDVELEDGSVFRVPIERAHIEDDAGKNTHVGGADGRIEGADHSLVDYNRAGVPLIEIVTKPITGVGDRGPEIAGAYMRAIRDIVRALNISHARMEQGNMRADVNVSLRRSPDDPFGTRSETKNVNSFRGIERTVQYEIRRQAAILNDGGEILQETRHWDEASQATAGGRVKSDADDYRYFPDPDLVMLHITPEHIERLKAEMPEMPRERRNRLKAEWKFSDVEMRDVINADALDLIEETVKLGASPAGAKKWWLGELSREANAKGISLEELPINAQEVADVEKLIAEGKLNDKLAKQTVALVLKGEGTPAEIVEKHGFKVVSDDGMLQTAVDEAMAANPDVVEKLRSGNMKPMGAIIGAVMRATKGQADAKAVTKIVMEKIKG</sequence>
<protein>
    <recommendedName>
        <fullName evidence="1">Aspartyl/glutamyl-tRNA(Asn/Gln) amidotransferase subunit B</fullName>
        <shortName evidence="1">Asp/Glu-ADT subunit B</shortName>
        <ecNumber evidence="1">6.3.5.-</ecNumber>
    </recommendedName>
</protein>
<reference key="1">
    <citation type="journal article" date="2009" name="J. Bacteriol.">
        <title>Genome sequence of the probiotic bacterium Bifidobacterium animalis subsp. lactis AD011.</title>
        <authorList>
            <person name="Kim J.F."/>
            <person name="Jeong H."/>
            <person name="Yu D.S."/>
            <person name="Choi S.-H."/>
            <person name="Hur C.-G."/>
            <person name="Park M.-S."/>
            <person name="Yoon S.H."/>
            <person name="Kim D.-W."/>
            <person name="Ji G.E."/>
            <person name="Park H.-S."/>
            <person name="Oh T.K."/>
        </authorList>
    </citation>
    <scope>NUCLEOTIDE SEQUENCE [LARGE SCALE GENOMIC DNA]</scope>
    <source>
        <strain>AD011</strain>
    </source>
</reference>
<keyword id="KW-0067">ATP-binding</keyword>
<keyword id="KW-0436">Ligase</keyword>
<keyword id="KW-0547">Nucleotide-binding</keyword>
<keyword id="KW-0648">Protein biosynthesis</keyword>
<keyword id="KW-1185">Reference proteome</keyword>
<feature type="chain" id="PRO_1000122509" description="Aspartyl/glutamyl-tRNA(Asn/Gln) amidotransferase subunit B">
    <location>
        <begin position="1"/>
        <end position="499"/>
    </location>
</feature>
<comment type="function">
    <text evidence="1">Allows the formation of correctly charged Asn-tRNA(Asn) or Gln-tRNA(Gln) through the transamidation of misacylated Asp-tRNA(Asn) or Glu-tRNA(Gln) in organisms which lack either or both of asparaginyl-tRNA or glutaminyl-tRNA synthetases. The reaction takes place in the presence of glutamine and ATP through an activated phospho-Asp-tRNA(Asn) or phospho-Glu-tRNA(Gln).</text>
</comment>
<comment type="catalytic activity">
    <reaction evidence="1">
        <text>L-glutamyl-tRNA(Gln) + L-glutamine + ATP + H2O = L-glutaminyl-tRNA(Gln) + L-glutamate + ADP + phosphate + H(+)</text>
        <dbReference type="Rhea" id="RHEA:17521"/>
        <dbReference type="Rhea" id="RHEA-COMP:9681"/>
        <dbReference type="Rhea" id="RHEA-COMP:9684"/>
        <dbReference type="ChEBI" id="CHEBI:15377"/>
        <dbReference type="ChEBI" id="CHEBI:15378"/>
        <dbReference type="ChEBI" id="CHEBI:29985"/>
        <dbReference type="ChEBI" id="CHEBI:30616"/>
        <dbReference type="ChEBI" id="CHEBI:43474"/>
        <dbReference type="ChEBI" id="CHEBI:58359"/>
        <dbReference type="ChEBI" id="CHEBI:78520"/>
        <dbReference type="ChEBI" id="CHEBI:78521"/>
        <dbReference type="ChEBI" id="CHEBI:456216"/>
    </reaction>
</comment>
<comment type="catalytic activity">
    <reaction evidence="1">
        <text>L-aspartyl-tRNA(Asn) + L-glutamine + ATP + H2O = L-asparaginyl-tRNA(Asn) + L-glutamate + ADP + phosphate + 2 H(+)</text>
        <dbReference type="Rhea" id="RHEA:14513"/>
        <dbReference type="Rhea" id="RHEA-COMP:9674"/>
        <dbReference type="Rhea" id="RHEA-COMP:9677"/>
        <dbReference type="ChEBI" id="CHEBI:15377"/>
        <dbReference type="ChEBI" id="CHEBI:15378"/>
        <dbReference type="ChEBI" id="CHEBI:29985"/>
        <dbReference type="ChEBI" id="CHEBI:30616"/>
        <dbReference type="ChEBI" id="CHEBI:43474"/>
        <dbReference type="ChEBI" id="CHEBI:58359"/>
        <dbReference type="ChEBI" id="CHEBI:78515"/>
        <dbReference type="ChEBI" id="CHEBI:78516"/>
        <dbReference type="ChEBI" id="CHEBI:456216"/>
    </reaction>
</comment>
<comment type="subunit">
    <text evidence="1">Heterotrimer of A, B and C subunits.</text>
</comment>
<comment type="similarity">
    <text evidence="1">Belongs to the GatB/GatE family. GatB subfamily.</text>
</comment>
<gene>
    <name evidence="1" type="primary">gatB</name>
    <name type="ordered locus">BLA_0668</name>
</gene>
<name>GATB_BIFA0</name>
<organism>
    <name type="scientific">Bifidobacterium animalis subsp. lactis (strain AD011)</name>
    <dbReference type="NCBI Taxonomy" id="442563"/>
    <lineage>
        <taxon>Bacteria</taxon>
        <taxon>Bacillati</taxon>
        <taxon>Actinomycetota</taxon>
        <taxon>Actinomycetes</taxon>
        <taxon>Bifidobacteriales</taxon>
        <taxon>Bifidobacteriaceae</taxon>
        <taxon>Bifidobacterium</taxon>
    </lineage>
</organism>
<proteinExistence type="inferred from homology"/>
<evidence type="ECO:0000255" key="1">
    <source>
        <dbReference type="HAMAP-Rule" id="MF_00121"/>
    </source>
</evidence>